<comment type="function">
    <text evidence="1">Catalyzes the phosphorylation of N-acetyl-D-glucosamine (GlcNAc) derived from cell-wall degradation, yielding GlcNAc-6-P.</text>
</comment>
<comment type="catalytic activity">
    <reaction evidence="1">
        <text>N-acetyl-D-glucosamine + ATP = N-acetyl-D-glucosamine 6-phosphate + ADP + H(+)</text>
        <dbReference type="Rhea" id="RHEA:17417"/>
        <dbReference type="ChEBI" id="CHEBI:15378"/>
        <dbReference type="ChEBI" id="CHEBI:30616"/>
        <dbReference type="ChEBI" id="CHEBI:57513"/>
        <dbReference type="ChEBI" id="CHEBI:456216"/>
        <dbReference type="ChEBI" id="CHEBI:506227"/>
        <dbReference type="EC" id="2.7.1.59"/>
    </reaction>
</comment>
<comment type="pathway">
    <text evidence="1">Cell wall biogenesis; peptidoglycan recycling.</text>
</comment>
<comment type="similarity">
    <text evidence="1">Belongs to the ROK (NagC/XylR) family. NagK subfamily.</text>
</comment>
<keyword id="KW-0067">ATP-binding</keyword>
<keyword id="KW-0119">Carbohydrate metabolism</keyword>
<keyword id="KW-0418">Kinase</keyword>
<keyword id="KW-0479">Metal-binding</keyword>
<keyword id="KW-0547">Nucleotide-binding</keyword>
<keyword id="KW-0808">Transferase</keyword>
<keyword id="KW-0862">Zinc</keyword>
<reference key="1">
    <citation type="journal article" date="2009" name="PLoS Genet.">
        <title>Organised genome dynamics in the Escherichia coli species results in highly diverse adaptive paths.</title>
        <authorList>
            <person name="Touchon M."/>
            <person name="Hoede C."/>
            <person name="Tenaillon O."/>
            <person name="Barbe V."/>
            <person name="Baeriswyl S."/>
            <person name="Bidet P."/>
            <person name="Bingen E."/>
            <person name="Bonacorsi S."/>
            <person name="Bouchier C."/>
            <person name="Bouvet O."/>
            <person name="Calteau A."/>
            <person name="Chiapello H."/>
            <person name="Clermont O."/>
            <person name="Cruveiller S."/>
            <person name="Danchin A."/>
            <person name="Diard M."/>
            <person name="Dossat C."/>
            <person name="Karoui M.E."/>
            <person name="Frapy E."/>
            <person name="Garry L."/>
            <person name="Ghigo J.M."/>
            <person name="Gilles A.M."/>
            <person name="Johnson J."/>
            <person name="Le Bouguenec C."/>
            <person name="Lescat M."/>
            <person name="Mangenot S."/>
            <person name="Martinez-Jehanne V."/>
            <person name="Matic I."/>
            <person name="Nassif X."/>
            <person name="Oztas S."/>
            <person name="Petit M.A."/>
            <person name="Pichon C."/>
            <person name="Rouy Z."/>
            <person name="Ruf C.S."/>
            <person name="Schneider D."/>
            <person name="Tourret J."/>
            <person name="Vacherie B."/>
            <person name="Vallenet D."/>
            <person name="Medigue C."/>
            <person name="Rocha E.P.C."/>
            <person name="Denamur E."/>
        </authorList>
    </citation>
    <scope>NUCLEOTIDE SEQUENCE [LARGE SCALE GENOMIC DNA]</scope>
    <source>
        <strain>ED1a</strain>
    </source>
</reference>
<dbReference type="EC" id="2.7.1.59" evidence="1"/>
<dbReference type="EMBL" id="CU928162">
    <property type="protein sequence ID" value="CAR07463.1"/>
    <property type="molecule type" value="Genomic_DNA"/>
</dbReference>
<dbReference type="RefSeq" id="WP_000291301.1">
    <property type="nucleotide sequence ID" value="NC_011745.1"/>
</dbReference>
<dbReference type="SMR" id="B7MTP9"/>
<dbReference type="KEGG" id="ecq:ECED1_1262"/>
<dbReference type="HOGENOM" id="CLU_036604_0_3_6"/>
<dbReference type="UniPathway" id="UPA00544"/>
<dbReference type="Proteomes" id="UP000000748">
    <property type="component" value="Chromosome"/>
</dbReference>
<dbReference type="GO" id="GO:0005524">
    <property type="term" value="F:ATP binding"/>
    <property type="evidence" value="ECO:0007669"/>
    <property type="project" value="UniProtKB-UniRule"/>
</dbReference>
<dbReference type="GO" id="GO:0045127">
    <property type="term" value="F:N-acetylglucosamine kinase activity"/>
    <property type="evidence" value="ECO:0007669"/>
    <property type="project" value="UniProtKB-UniRule"/>
</dbReference>
<dbReference type="GO" id="GO:0008270">
    <property type="term" value="F:zinc ion binding"/>
    <property type="evidence" value="ECO:0007669"/>
    <property type="project" value="UniProtKB-UniRule"/>
</dbReference>
<dbReference type="GO" id="GO:0006044">
    <property type="term" value="P:N-acetylglucosamine metabolic process"/>
    <property type="evidence" value="ECO:0007669"/>
    <property type="project" value="UniProtKB-UniRule"/>
</dbReference>
<dbReference type="GO" id="GO:0009254">
    <property type="term" value="P:peptidoglycan turnover"/>
    <property type="evidence" value="ECO:0007669"/>
    <property type="project" value="UniProtKB-UniRule"/>
</dbReference>
<dbReference type="CDD" id="cd24057">
    <property type="entry name" value="ASKHA_NBD_ROK_NAGK"/>
    <property type="match status" value="1"/>
</dbReference>
<dbReference type="FunFam" id="3.30.420.40:FF:000049">
    <property type="entry name" value="N-acetyl-D-glucosamine kinase"/>
    <property type="match status" value="1"/>
</dbReference>
<dbReference type="FunFam" id="3.30.420.40:FF:000051">
    <property type="entry name" value="N-acetyl-D-glucosamine kinase"/>
    <property type="match status" value="1"/>
</dbReference>
<dbReference type="Gene3D" id="3.30.420.40">
    <property type="match status" value="2"/>
</dbReference>
<dbReference type="HAMAP" id="MF_01271">
    <property type="entry name" value="GlcNAc_kinase"/>
    <property type="match status" value="1"/>
</dbReference>
<dbReference type="InterPro" id="IPR043129">
    <property type="entry name" value="ATPase_NBD"/>
</dbReference>
<dbReference type="InterPro" id="IPR023505">
    <property type="entry name" value="N-acetyl-D-glucosamine_kinase"/>
</dbReference>
<dbReference type="InterPro" id="IPR000600">
    <property type="entry name" value="ROK"/>
</dbReference>
<dbReference type="InterPro" id="IPR049874">
    <property type="entry name" value="ROK_cs"/>
</dbReference>
<dbReference type="NCBIfam" id="NF009835">
    <property type="entry name" value="PRK13310.1"/>
    <property type="match status" value="1"/>
</dbReference>
<dbReference type="PANTHER" id="PTHR18964:SF162">
    <property type="entry name" value="N-ACETYL-D-GLUCOSAMINE KINASE"/>
    <property type="match status" value="1"/>
</dbReference>
<dbReference type="PANTHER" id="PTHR18964">
    <property type="entry name" value="ROK (REPRESSOR, ORF, KINASE) FAMILY"/>
    <property type="match status" value="1"/>
</dbReference>
<dbReference type="Pfam" id="PF00480">
    <property type="entry name" value="ROK"/>
    <property type="match status" value="1"/>
</dbReference>
<dbReference type="SUPFAM" id="SSF53067">
    <property type="entry name" value="Actin-like ATPase domain"/>
    <property type="match status" value="1"/>
</dbReference>
<dbReference type="PROSITE" id="PS01125">
    <property type="entry name" value="ROK"/>
    <property type="match status" value="1"/>
</dbReference>
<evidence type="ECO:0000255" key="1">
    <source>
        <dbReference type="HAMAP-Rule" id="MF_01271"/>
    </source>
</evidence>
<accession>B7MTP9</accession>
<sequence>MYYGFDIGGTKIALGVFDSGRQLQWEKRVPTPRDSYDAFLDAVCELVAEADRRFGCKGSVGIGIPGMPETEDGTLYAANVPAASGKPLRADLSARLDRDVRLDNDANCFALSEAWDDEFTQYPLVMGLILGTGVGGGLIFNGKPITGKSYITGEFGHMRLPVDALTMMGLDFPLRRCGCGQHGCIENYLSGRGFAWLYQHYYHQPLQAPEIIALYDQGDEQARAHVERYLDLLAVCLGNILTIVDPDLVVIGGGLSNFPAITTQLAERLPRHLLPVARVPRIERARHGDAGGMRGAAFLHLTD</sequence>
<feature type="chain" id="PRO_1000165174" description="N-acetyl-D-glucosamine kinase">
    <location>
        <begin position="1"/>
        <end position="303"/>
    </location>
</feature>
<feature type="binding site" evidence="1">
    <location>
        <begin position="4"/>
        <end position="11"/>
    </location>
    <ligand>
        <name>ATP</name>
        <dbReference type="ChEBI" id="CHEBI:30616"/>
    </ligand>
</feature>
<feature type="binding site" evidence="1">
    <location>
        <begin position="133"/>
        <end position="140"/>
    </location>
    <ligand>
        <name>ATP</name>
        <dbReference type="ChEBI" id="CHEBI:30616"/>
    </ligand>
</feature>
<feature type="binding site" evidence="1">
    <location>
        <position position="157"/>
    </location>
    <ligand>
        <name>Zn(2+)</name>
        <dbReference type="ChEBI" id="CHEBI:29105"/>
    </ligand>
</feature>
<feature type="binding site" evidence="1">
    <location>
        <position position="177"/>
    </location>
    <ligand>
        <name>Zn(2+)</name>
        <dbReference type="ChEBI" id="CHEBI:29105"/>
    </ligand>
</feature>
<feature type="binding site" evidence="1">
    <location>
        <position position="179"/>
    </location>
    <ligand>
        <name>Zn(2+)</name>
        <dbReference type="ChEBI" id="CHEBI:29105"/>
    </ligand>
</feature>
<feature type="binding site" evidence="1">
    <location>
        <position position="184"/>
    </location>
    <ligand>
        <name>Zn(2+)</name>
        <dbReference type="ChEBI" id="CHEBI:29105"/>
    </ligand>
</feature>
<organism>
    <name type="scientific">Escherichia coli O81 (strain ED1a)</name>
    <dbReference type="NCBI Taxonomy" id="585397"/>
    <lineage>
        <taxon>Bacteria</taxon>
        <taxon>Pseudomonadati</taxon>
        <taxon>Pseudomonadota</taxon>
        <taxon>Gammaproteobacteria</taxon>
        <taxon>Enterobacterales</taxon>
        <taxon>Enterobacteriaceae</taxon>
        <taxon>Escherichia</taxon>
    </lineage>
</organism>
<protein>
    <recommendedName>
        <fullName evidence="1">N-acetyl-D-glucosamine kinase</fullName>
        <ecNumber evidence="1">2.7.1.59</ecNumber>
    </recommendedName>
    <alternativeName>
        <fullName evidence="1">GlcNAc kinase</fullName>
    </alternativeName>
</protein>
<proteinExistence type="inferred from homology"/>
<gene>
    <name evidence="1" type="primary">nagK</name>
    <name type="ordered locus">ECED1_1262</name>
</gene>
<name>NAGK_ECO81</name>